<sequence length="91" mass="10335">MRHIKVNVKGQVQGVGFRYFTQQAATENAIVGWVRNEDDGSVLIEAQGEDKNVDAFLNEVEKGPTKFARVQDMEVKELAEDTELTKFEVKY</sequence>
<evidence type="ECO:0000255" key="1">
    <source>
        <dbReference type="PROSITE-ProRule" id="PRU00520"/>
    </source>
</evidence>
<evidence type="ECO:0000305" key="2"/>
<proteinExistence type="inferred from homology"/>
<organism>
    <name type="scientific">Oceanobacillus iheyensis (strain DSM 14371 / CIP 107618 / JCM 11309 / KCTC 3954 / HTE831)</name>
    <dbReference type="NCBI Taxonomy" id="221109"/>
    <lineage>
        <taxon>Bacteria</taxon>
        <taxon>Bacillati</taxon>
        <taxon>Bacillota</taxon>
        <taxon>Bacilli</taxon>
        <taxon>Bacillales</taxon>
        <taxon>Bacillaceae</taxon>
        <taxon>Oceanobacillus</taxon>
    </lineage>
</organism>
<keyword id="KW-0378">Hydrolase</keyword>
<keyword id="KW-1185">Reference proteome</keyword>
<comment type="catalytic activity">
    <reaction>
        <text>an acyl phosphate + H2O = a carboxylate + phosphate + H(+)</text>
        <dbReference type="Rhea" id="RHEA:14965"/>
        <dbReference type="ChEBI" id="CHEBI:15377"/>
        <dbReference type="ChEBI" id="CHEBI:15378"/>
        <dbReference type="ChEBI" id="CHEBI:29067"/>
        <dbReference type="ChEBI" id="CHEBI:43474"/>
        <dbReference type="ChEBI" id="CHEBI:59918"/>
        <dbReference type="EC" id="3.6.1.7"/>
    </reaction>
</comment>
<comment type="similarity">
    <text evidence="2">Belongs to the acylphosphatase family.</text>
</comment>
<comment type="sequence caution" evidence="2">
    <conflict type="erroneous initiation">
        <sequence resource="EMBL-CDS" id="BAC15209"/>
    </conflict>
</comment>
<accession>Q8ELH4</accession>
<feature type="chain" id="PRO_0000326762" description="Acylphosphatase">
    <location>
        <begin position="1"/>
        <end position="91"/>
    </location>
</feature>
<feature type="domain" description="Acylphosphatase-like" evidence="1">
    <location>
        <begin position="3"/>
        <end position="91"/>
    </location>
</feature>
<feature type="active site" evidence="1">
    <location>
        <position position="18"/>
    </location>
</feature>
<feature type="active site" evidence="1">
    <location>
        <position position="36"/>
    </location>
</feature>
<reference key="1">
    <citation type="journal article" date="2002" name="Nucleic Acids Res.">
        <title>Genome sequence of Oceanobacillus iheyensis isolated from the Iheya Ridge and its unexpected adaptive capabilities to extreme environments.</title>
        <authorList>
            <person name="Takami H."/>
            <person name="Takaki Y."/>
            <person name="Uchiyama I."/>
        </authorList>
    </citation>
    <scope>NUCLEOTIDE SEQUENCE [LARGE SCALE GENOMIC DNA]</scope>
    <source>
        <strain>DSM 14371 / CIP 107618 / JCM 11309 / KCTC 3954 / HTE831</strain>
    </source>
</reference>
<name>ACYP_OCEIH</name>
<gene>
    <name type="primary">acyP</name>
    <name type="ordered locus">OB3253</name>
</gene>
<dbReference type="EC" id="3.6.1.7"/>
<dbReference type="EMBL" id="BA000028">
    <property type="protein sequence ID" value="BAC15209.1"/>
    <property type="status" value="ALT_INIT"/>
    <property type="molecule type" value="Genomic_DNA"/>
</dbReference>
<dbReference type="RefSeq" id="WP_041544360.1">
    <property type="nucleotide sequence ID" value="NC_004193.1"/>
</dbReference>
<dbReference type="SMR" id="Q8ELH4"/>
<dbReference type="STRING" id="221109.gene:10735505"/>
<dbReference type="KEGG" id="oih:OB3253"/>
<dbReference type="eggNOG" id="COG1254">
    <property type="taxonomic scope" value="Bacteria"/>
</dbReference>
<dbReference type="HOGENOM" id="CLU_141932_2_1_9"/>
<dbReference type="OrthoDB" id="9808093at2"/>
<dbReference type="Proteomes" id="UP000000822">
    <property type="component" value="Chromosome"/>
</dbReference>
<dbReference type="GO" id="GO:0003998">
    <property type="term" value="F:acylphosphatase activity"/>
    <property type="evidence" value="ECO:0007669"/>
    <property type="project" value="UniProtKB-EC"/>
</dbReference>
<dbReference type="Gene3D" id="3.30.70.100">
    <property type="match status" value="1"/>
</dbReference>
<dbReference type="InterPro" id="IPR020456">
    <property type="entry name" value="Acylphosphatase"/>
</dbReference>
<dbReference type="InterPro" id="IPR001792">
    <property type="entry name" value="Acylphosphatase-like_dom"/>
</dbReference>
<dbReference type="InterPro" id="IPR036046">
    <property type="entry name" value="Acylphosphatase-like_dom_sf"/>
</dbReference>
<dbReference type="InterPro" id="IPR017968">
    <property type="entry name" value="Acylphosphatase_CS"/>
</dbReference>
<dbReference type="PANTHER" id="PTHR47268">
    <property type="entry name" value="ACYLPHOSPHATASE"/>
    <property type="match status" value="1"/>
</dbReference>
<dbReference type="PANTHER" id="PTHR47268:SF4">
    <property type="entry name" value="ACYLPHOSPHATASE"/>
    <property type="match status" value="1"/>
</dbReference>
<dbReference type="Pfam" id="PF00708">
    <property type="entry name" value="Acylphosphatase"/>
    <property type="match status" value="1"/>
</dbReference>
<dbReference type="PRINTS" id="PR00112">
    <property type="entry name" value="ACYLPHPHTASE"/>
</dbReference>
<dbReference type="SUPFAM" id="SSF54975">
    <property type="entry name" value="Acylphosphatase/BLUF domain-like"/>
    <property type="match status" value="1"/>
</dbReference>
<dbReference type="PROSITE" id="PS00150">
    <property type="entry name" value="ACYLPHOSPHATASE_1"/>
    <property type="match status" value="1"/>
</dbReference>
<dbReference type="PROSITE" id="PS00151">
    <property type="entry name" value="ACYLPHOSPHATASE_2"/>
    <property type="match status" value="1"/>
</dbReference>
<dbReference type="PROSITE" id="PS51160">
    <property type="entry name" value="ACYLPHOSPHATASE_3"/>
    <property type="match status" value="1"/>
</dbReference>
<protein>
    <recommendedName>
        <fullName>Acylphosphatase</fullName>
        <ecNumber>3.6.1.7</ecNumber>
    </recommendedName>
    <alternativeName>
        <fullName>Acylphosphate phosphohydrolase</fullName>
    </alternativeName>
</protein>